<comment type="function">
    <text evidence="1">Larval storage protein (LSP) which may serve as a store of amino acids for synthesis of adult proteins.</text>
</comment>
<comment type="subcellular location">
    <subcellularLocation>
        <location evidence="1">Secreted</location>
        <location evidence="1">Extracellular space</location>
    </subcellularLocation>
</comment>
<comment type="allergen">
    <text>Causes an allergic reaction in human.</text>
</comment>
<comment type="similarity">
    <text evidence="3">Belongs to the hemocyanin family.</text>
</comment>
<name>CRPI_PERAM</name>
<protein>
    <recommendedName>
        <fullName>Allergen Cr-PI</fullName>
    </recommendedName>
    <allergenName>Per a 3</allergenName>
</protein>
<proteinExistence type="evidence at protein level"/>
<organism>
    <name type="scientific">Periplaneta americana</name>
    <name type="common">American cockroach</name>
    <name type="synonym">Blatta americana</name>
    <dbReference type="NCBI Taxonomy" id="6978"/>
    <lineage>
        <taxon>Eukaryota</taxon>
        <taxon>Metazoa</taxon>
        <taxon>Ecdysozoa</taxon>
        <taxon>Arthropoda</taxon>
        <taxon>Hexapoda</taxon>
        <taxon>Insecta</taxon>
        <taxon>Pterygota</taxon>
        <taxon>Neoptera</taxon>
        <taxon>Polyneoptera</taxon>
        <taxon>Dictyoptera</taxon>
        <taxon>Blattodea</taxon>
        <taxon>Blattoidea</taxon>
        <taxon>Blattidae</taxon>
        <taxon>Blattinae</taxon>
        <taxon>Periplaneta</taxon>
    </lineage>
</organism>
<reference key="1">
    <citation type="journal article" date="1996" name="J. Biol. Chem.">
        <title>Sequencing analysis of cDNA clones encoding the American cockroach Cr-PI allergens. Homology with insect hemolymph proteins.</title>
        <authorList>
            <person name="Wu C.H.H."/>
            <person name="Lee M.F."/>
            <person name="Liao S.C."/>
        </authorList>
    </citation>
    <scope>NUCLEOTIDE SEQUENCE [MRNA]</scope>
</reference>
<evidence type="ECO:0000250" key="1"/>
<evidence type="ECO:0000255" key="2"/>
<evidence type="ECO:0000305" key="3"/>
<keyword id="KW-0020">Allergen</keyword>
<keyword id="KW-0325">Glycoprotein</keyword>
<keyword id="KW-0964">Secreted</keyword>
<keyword id="KW-0732">Signal</keyword>
<keyword id="KW-0758">Storage protein</keyword>
<sequence>MKTALVFAAVVAFVAARFPDHKDYKQLADKQFLAKQRDVLRLFHRVHQHNILNDQVEVGIPMTSKQTSATTVPPSGEAVHGVLQEGHARPRGEPFSVNYEKHREQAIMLYDLLYFANDYDTFYKTACWARDRVNEGMFMYSFSIAVFHRDDMQGVMLPPPYEVYPYLFVDHDVIHMAQKYWMKNAGSGEHHSHVIPVNFTLRTQDHLLAYFTSDVNLNAFNTYYRYYYPSWYNTTLYGHNIDRRGEQFYYTYKQIYARYFLERLSNDLPDVYPFYYSKPVKSAYNPNLRYHNGEEMPVRPSNMYVTNFDLYYIADIKNYEKRVEDAIDFGYAFDEHMKPHSLYHDVHGMEYLADMIEGNMDSPNFYFYGSIYHMYHSMIGHIVDPYHKMGLAPSLEHPETVLRDPVFYQLWKRVDHLFQKYKNRLPRYTHDELAFEGVKVENVDVGKLYTYFEQYDMSLDMAVYVNNVDQISNVDVQLAVRLNHKPFTYNIEVSSDKAQDVYVAVFLGPKYDYLGREYDLNDRRHYFVEMDRFPYHVGAGKTVIERNSHDSNIIAPERDSYRTFYKKVQEAYEGKSQYYVDKGHNYCGYPENLLIPKGKKGGQAYTFYVIVTPYVKQDEHDFEPYNYKAFSYCGVGSERKYPDNKPLGYPFDRKIYSNDFYTPNMYFKDVIIFHKKYDEVGVQGH</sequence>
<feature type="signal peptide" evidence="2">
    <location>
        <begin position="1"/>
        <end position="16"/>
    </location>
</feature>
<feature type="chain" id="PRO_0000013339" description="Allergen Cr-PI">
    <location>
        <begin position="17"/>
        <end position="685"/>
    </location>
</feature>
<feature type="glycosylation site" description="N-linked (GlcNAc...) asparagine" evidence="2">
    <location>
        <position position="233"/>
    </location>
</feature>
<accession>Q25641</accession>
<accession>Q94644</accession>
<dbReference type="EMBL" id="L40818">
    <property type="protein sequence ID" value="AAB09629.1"/>
    <property type="molecule type" value="mRNA"/>
</dbReference>
<dbReference type="SMR" id="Q25641"/>
<dbReference type="Allergome" id="537">
    <property type="allergen name" value="Per a 3"/>
</dbReference>
<dbReference type="Allergome" id="538">
    <property type="allergen name" value="Per a 3.0101"/>
</dbReference>
<dbReference type="GO" id="GO:0005576">
    <property type="term" value="C:extracellular region"/>
    <property type="evidence" value="ECO:0007669"/>
    <property type="project" value="UniProtKB-SubCell"/>
</dbReference>
<dbReference type="GO" id="GO:0045735">
    <property type="term" value="F:nutrient reservoir activity"/>
    <property type="evidence" value="ECO:0007669"/>
    <property type="project" value="UniProtKB-KW"/>
</dbReference>
<dbReference type="Gene3D" id="1.10.1280.10">
    <property type="entry name" value="Di-copper center containing domain from catechol oxidase"/>
    <property type="match status" value="1"/>
</dbReference>
<dbReference type="Gene3D" id="2.60.40.1520">
    <property type="entry name" value="Hemocyanin, C-terminal domain"/>
    <property type="match status" value="1"/>
</dbReference>
<dbReference type="Gene3D" id="1.20.1370.10">
    <property type="entry name" value="Hemocyanin, N-terminal domain"/>
    <property type="match status" value="1"/>
</dbReference>
<dbReference type="InterPro" id="IPR008922">
    <property type="entry name" value="Di-copper_centre_dom_sf"/>
</dbReference>
<dbReference type="InterPro" id="IPR013788">
    <property type="entry name" value="Hemocyanin/hexamerin"/>
</dbReference>
<dbReference type="InterPro" id="IPR000896">
    <property type="entry name" value="Hemocyanin/hexamerin_mid_dom"/>
</dbReference>
<dbReference type="InterPro" id="IPR005203">
    <property type="entry name" value="Hemocyanin_C"/>
</dbReference>
<dbReference type="InterPro" id="IPR037020">
    <property type="entry name" value="Hemocyanin_C_sf"/>
</dbReference>
<dbReference type="InterPro" id="IPR005204">
    <property type="entry name" value="Hemocyanin_N"/>
</dbReference>
<dbReference type="InterPro" id="IPR036697">
    <property type="entry name" value="Hemocyanin_N_sf"/>
</dbReference>
<dbReference type="InterPro" id="IPR014756">
    <property type="entry name" value="Ig_E-set"/>
</dbReference>
<dbReference type="PANTHER" id="PTHR11511:SF5">
    <property type="entry name" value="FAT-BODY PROTEIN 1-RELATED"/>
    <property type="match status" value="1"/>
</dbReference>
<dbReference type="PANTHER" id="PTHR11511">
    <property type="entry name" value="LARVAL STORAGE PROTEIN/PHENOLOXIDASE"/>
    <property type="match status" value="1"/>
</dbReference>
<dbReference type="Pfam" id="PF03723">
    <property type="entry name" value="Hemocyanin_C"/>
    <property type="match status" value="1"/>
</dbReference>
<dbReference type="Pfam" id="PF00372">
    <property type="entry name" value="Hemocyanin_M"/>
    <property type="match status" value="1"/>
</dbReference>
<dbReference type="Pfam" id="PF03722">
    <property type="entry name" value="Hemocyanin_N"/>
    <property type="match status" value="1"/>
</dbReference>
<dbReference type="PRINTS" id="PR00187">
    <property type="entry name" value="HAEMOCYANIN"/>
</dbReference>
<dbReference type="SUPFAM" id="SSF48056">
    <property type="entry name" value="Di-copper centre-containing domain"/>
    <property type="match status" value="1"/>
</dbReference>
<dbReference type="SUPFAM" id="SSF81296">
    <property type="entry name" value="E set domains"/>
    <property type="match status" value="1"/>
</dbReference>
<dbReference type="SUPFAM" id="SSF48050">
    <property type="entry name" value="Hemocyanin, N-terminal domain"/>
    <property type="match status" value="1"/>
</dbReference>
<dbReference type="PROSITE" id="PS00210">
    <property type="entry name" value="HEMOCYANIN_2"/>
    <property type="match status" value="1"/>
</dbReference>